<sequence>MIEDISKKIAWLKKNPKMLKGIFRGIERETLRIQKNGHFSKTIHPYLIGSSLTHKWITTDFSENLLEFITPTSDNIDYLLSFLTDLHSFTASKIKNERMWPFSIPYCFNDQTNIQIAQYGKSNIGKMKTTYRIGLKNRYGDLINTISGIHYNFSLPLFFWTNWENNQNKKNNTDLISSGYLNLIRNYYRFGWIVPYLFGSSPAISSFFLKDTKKKYKFKKNKEDIFYLPWSTSLRLSDIGYSNTNILDLNIMFNDFNEYIESFQNALKTPSKKFINIGLKDEHGNFKQLNTNILQIENELYTQIRPKRKTKDGESLLEALKNRGIEYVEIRSLDVNPFSPIGINKNQILLLDLFLIWCALIDSPKIDKTDFLLTTKNWERIIYEGRKPNQKIYINNNNETKTLIEIGQIIFKDLNEIALILDSNSNNLLYQKACKETQLFLKNPELTYSAQCLNFLMTTGIKKTGLYLANKYHEKFINKNYFNLNQSVLEQEVIRSHQKKIEIEREDILSFEEYIRNK</sequence>
<keyword id="KW-0067">ATP-binding</keyword>
<keyword id="KW-0317">Glutathione biosynthesis</keyword>
<keyword id="KW-0436">Ligase</keyword>
<keyword id="KW-0547">Nucleotide-binding</keyword>
<dbReference type="EC" id="6.3.2.2" evidence="1"/>
<dbReference type="EMBL" id="CP001161">
    <property type="protein sequence ID" value="ACL30759.1"/>
    <property type="molecule type" value="Genomic_DNA"/>
</dbReference>
<dbReference type="RefSeq" id="WP_009874363.1">
    <property type="nucleotide sequence ID" value="NC_011833.1"/>
</dbReference>
<dbReference type="SMR" id="B8D9I8"/>
<dbReference type="KEGG" id="bap:BUAP5A_400"/>
<dbReference type="HOGENOM" id="CLU_020728_3_0_6"/>
<dbReference type="OrthoDB" id="9803907at2"/>
<dbReference type="UniPathway" id="UPA00142">
    <property type="reaction ID" value="UER00209"/>
</dbReference>
<dbReference type="Proteomes" id="UP000006904">
    <property type="component" value="Chromosome"/>
</dbReference>
<dbReference type="GO" id="GO:0005829">
    <property type="term" value="C:cytosol"/>
    <property type="evidence" value="ECO:0007669"/>
    <property type="project" value="TreeGrafter"/>
</dbReference>
<dbReference type="GO" id="GO:0005524">
    <property type="term" value="F:ATP binding"/>
    <property type="evidence" value="ECO:0007669"/>
    <property type="project" value="UniProtKB-KW"/>
</dbReference>
<dbReference type="GO" id="GO:0004357">
    <property type="term" value="F:glutamate-cysteine ligase activity"/>
    <property type="evidence" value="ECO:0007669"/>
    <property type="project" value="UniProtKB-UniRule"/>
</dbReference>
<dbReference type="GO" id="GO:0046872">
    <property type="term" value="F:metal ion binding"/>
    <property type="evidence" value="ECO:0007669"/>
    <property type="project" value="TreeGrafter"/>
</dbReference>
<dbReference type="GO" id="GO:0006750">
    <property type="term" value="P:glutathione biosynthetic process"/>
    <property type="evidence" value="ECO:0007669"/>
    <property type="project" value="UniProtKB-UniRule"/>
</dbReference>
<dbReference type="Gene3D" id="3.30.590.20">
    <property type="match status" value="1"/>
</dbReference>
<dbReference type="HAMAP" id="MF_00578">
    <property type="entry name" value="Glu_cys_ligase"/>
    <property type="match status" value="1"/>
</dbReference>
<dbReference type="InterPro" id="IPR014746">
    <property type="entry name" value="Gln_synth/guanido_kin_cat_dom"/>
</dbReference>
<dbReference type="InterPro" id="IPR007370">
    <property type="entry name" value="Glu_cys_ligase"/>
</dbReference>
<dbReference type="InterPro" id="IPR006334">
    <property type="entry name" value="Glut_cys_ligase"/>
</dbReference>
<dbReference type="NCBIfam" id="TIGR01434">
    <property type="entry name" value="glu_cys_ligase"/>
    <property type="match status" value="1"/>
</dbReference>
<dbReference type="PANTHER" id="PTHR38761">
    <property type="entry name" value="GLUTAMATE--CYSTEINE LIGASE"/>
    <property type="match status" value="1"/>
</dbReference>
<dbReference type="PANTHER" id="PTHR38761:SF1">
    <property type="entry name" value="GLUTAMATE--CYSTEINE LIGASE"/>
    <property type="match status" value="1"/>
</dbReference>
<dbReference type="Pfam" id="PF04262">
    <property type="entry name" value="Glu_cys_ligase"/>
    <property type="match status" value="1"/>
</dbReference>
<dbReference type="SUPFAM" id="SSF55931">
    <property type="entry name" value="Glutamine synthetase/guanido kinase"/>
    <property type="match status" value="1"/>
</dbReference>
<protein>
    <recommendedName>
        <fullName evidence="1">Glutamate--cysteine ligase</fullName>
        <ecNumber evidence="1">6.3.2.2</ecNumber>
    </recommendedName>
    <alternativeName>
        <fullName evidence="1">Gamma-ECS</fullName>
        <shortName evidence="1">GCS</shortName>
    </alternativeName>
    <alternativeName>
        <fullName evidence="1">Gamma-glutamylcysteine synthetase</fullName>
    </alternativeName>
</protein>
<gene>
    <name evidence="1" type="primary">gshA</name>
    <name type="ordered locus">BUAP5A_400</name>
</gene>
<reference key="1">
    <citation type="journal article" date="2009" name="Science">
        <title>The dynamics and time scale of ongoing genomic erosion in symbiotic bacteria.</title>
        <authorList>
            <person name="Moran N.A."/>
            <person name="McLaughlin H.J."/>
            <person name="Sorek R."/>
        </authorList>
    </citation>
    <scope>NUCLEOTIDE SEQUENCE [LARGE SCALE GENOMIC DNA]</scope>
    <source>
        <strain>5A</strain>
    </source>
</reference>
<organism>
    <name type="scientific">Buchnera aphidicola subsp. Acyrthosiphon pisum (strain 5A)</name>
    <dbReference type="NCBI Taxonomy" id="563178"/>
    <lineage>
        <taxon>Bacteria</taxon>
        <taxon>Pseudomonadati</taxon>
        <taxon>Pseudomonadota</taxon>
        <taxon>Gammaproteobacteria</taxon>
        <taxon>Enterobacterales</taxon>
        <taxon>Erwiniaceae</taxon>
        <taxon>Buchnera</taxon>
    </lineage>
</organism>
<comment type="catalytic activity">
    <reaction evidence="1">
        <text>L-cysteine + L-glutamate + ATP = gamma-L-glutamyl-L-cysteine + ADP + phosphate + H(+)</text>
        <dbReference type="Rhea" id="RHEA:13285"/>
        <dbReference type="ChEBI" id="CHEBI:15378"/>
        <dbReference type="ChEBI" id="CHEBI:29985"/>
        <dbReference type="ChEBI" id="CHEBI:30616"/>
        <dbReference type="ChEBI" id="CHEBI:35235"/>
        <dbReference type="ChEBI" id="CHEBI:43474"/>
        <dbReference type="ChEBI" id="CHEBI:58173"/>
        <dbReference type="ChEBI" id="CHEBI:456216"/>
        <dbReference type="EC" id="6.3.2.2"/>
    </reaction>
</comment>
<comment type="pathway">
    <text evidence="1">Sulfur metabolism; glutathione biosynthesis; glutathione from L-cysteine and L-glutamate: step 1/2.</text>
</comment>
<comment type="similarity">
    <text evidence="1">Belongs to the glutamate--cysteine ligase type 1 family. Type 1 subfamily.</text>
</comment>
<accession>B8D9I8</accession>
<evidence type="ECO:0000255" key="1">
    <source>
        <dbReference type="HAMAP-Rule" id="MF_00578"/>
    </source>
</evidence>
<proteinExistence type="inferred from homology"/>
<name>GSH1_BUCA5</name>
<feature type="chain" id="PRO_1000146874" description="Glutamate--cysteine ligase">
    <location>
        <begin position="1"/>
        <end position="518"/>
    </location>
</feature>